<reference key="1">
    <citation type="submission" date="2003-03" db="EMBL/GenBank/DDBJ databases">
        <title>African swine fever virus genomes.</title>
        <authorList>
            <person name="Kutish G.F."/>
            <person name="Rock D.L."/>
        </authorList>
    </citation>
    <scope>NUCLEOTIDE SEQUENCE [LARGE SCALE GENOMIC DNA]</scope>
</reference>
<sequence length="72" mass="8408">METQKLISMVKEALEKYQYPLTAKNIKVVIQKEHNVILPTGSINSILYSNSELFEKIDKTNTIYPPLWIRKN</sequence>
<keyword id="KW-0244">Early protein</keyword>
<keyword id="KW-0946">Virion</keyword>
<organism>
    <name type="scientific">African swine fever virus (isolate Warthog/Namibia/Wart80/1980)</name>
    <name type="common">ASFV</name>
    <dbReference type="NCBI Taxonomy" id="561444"/>
    <lineage>
        <taxon>Viruses</taxon>
        <taxon>Varidnaviria</taxon>
        <taxon>Bamfordvirae</taxon>
        <taxon>Nucleocytoviricota</taxon>
        <taxon>Pokkesviricetes</taxon>
        <taxon>Asfuvirales</taxon>
        <taxon>Asfarviridae</taxon>
        <taxon>Asfivirus</taxon>
        <taxon>African swine fever virus</taxon>
    </lineage>
</organism>
<gene>
    <name type="ordered locus">War-151</name>
</gene>
<evidence type="ECO:0000250" key="1">
    <source>
        <dbReference type="UniProtKB" id="P27946"/>
    </source>
</evidence>
<evidence type="ECO:0000305" key="2"/>
<feature type="chain" id="PRO_0000373728" description="Uncharacterized protein I73R">
    <location>
        <begin position="1"/>
        <end position="72"/>
    </location>
</feature>
<name>VF73R_ASFWA</name>
<proteinExistence type="inferred from homology"/>
<accession>P0CAK2</accession>
<comment type="subcellular location">
    <subcellularLocation>
        <location evidence="1">Virion</location>
    </subcellularLocation>
</comment>
<comment type="induction">
    <text evidence="2">Expressed in the early phase of the viral replicative cycle.</text>
</comment>
<comment type="similarity">
    <text evidence="2">Belongs to the asfivirus I73R family.</text>
</comment>
<dbReference type="EMBL" id="AY261366">
    <property type="status" value="NOT_ANNOTATED_CDS"/>
    <property type="molecule type" value="Genomic_DNA"/>
</dbReference>
<dbReference type="SMR" id="P0CAK2"/>
<dbReference type="Proteomes" id="UP000000858">
    <property type="component" value="Segment"/>
</dbReference>
<dbReference type="GO" id="GO:0044423">
    <property type="term" value="C:virion component"/>
    <property type="evidence" value="ECO:0007669"/>
    <property type="project" value="UniProtKB-KW"/>
</dbReference>
<protein>
    <recommendedName>
        <fullName>Uncharacterized protein I73R</fullName>
    </recommendedName>
</protein>
<organismHost>
    <name type="scientific">Ornithodoros</name>
    <name type="common">relapsing fever ticks</name>
    <dbReference type="NCBI Taxonomy" id="6937"/>
</organismHost>
<organismHost>
    <name type="scientific">Phacochoerus aethiopicus</name>
    <name type="common">Warthog</name>
    <dbReference type="NCBI Taxonomy" id="85517"/>
</organismHost>
<organismHost>
    <name type="scientific">Phacochoerus africanus</name>
    <name type="common">Warthog</name>
    <dbReference type="NCBI Taxonomy" id="41426"/>
</organismHost>
<organismHost>
    <name type="scientific">Potamochoerus larvatus</name>
    <name type="common">Bushpig</name>
    <dbReference type="NCBI Taxonomy" id="273792"/>
</organismHost>
<organismHost>
    <name type="scientific">Sus scrofa</name>
    <name type="common">Pig</name>
    <dbReference type="NCBI Taxonomy" id="9823"/>
</organismHost>